<reference key="1">
    <citation type="submission" date="2007-06" db="EMBL/GenBank/DDBJ databases">
        <title>Complete sequence of chromosome of Staphylococcus aureus subsp. aureus JH1.</title>
        <authorList>
            <consortium name="US DOE Joint Genome Institute"/>
            <person name="Copeland A."/>
            <person name="Lucas S."/>
            <person name="Lapidus A."/>
            <person name="Barry K."/>
            <person name="Detter J.C."/>
            <person name="Glavina del Rio T."/>
            <person name="Hammon N."/>
            <person name="Israni S."/>
            <person name="Dalin E."/>
            <person name="Tice H."/>
            <person name="Pitluck S."/>
            <person name="Chain P."/>
            <person name="Malfatti S."/>
            <person name="Shin M."/>
            <person name="Vergez L."/>
            <person name="Schmutz J."/>
            <person name="Larimer F."/>
            <person name="Land M."/>
            <person name="Hauser L."/>
            <person name="Kyrpides N."/>
            <person name="Ivanova N."/>
            <person name="Tomasz A."/>
            <person name="Richardson P."/>
        </authorList>
    </citation>
    <scope>NUCLEOTIDE SEQUENCE [LARGE SCALE GENOMIC DNA]</scope>
    <source>
        <strain>JH1</strain>
    </source>
</reference>
<organism>
    <name type="scientific">Staphylococcus aureus (strain JH1)</name>
    <dbReference type="NCBI Taxonomy" id="359787"/>
    <lineage>
        <taxon>Bacteria</taxon>
        <taxon>Bacillati</taxon>
        <taxon>Bacillota</taxon>
        <taxon>Bacilli</taxon>
        <taxon>Bacillales</taxon>
        <taxon>Staphylococcaceae</taxon>
        <taxon>Staphylococcus</taxon>
    </lineage>
</organism>
<accession>A6U574</accession>
<gene>
    <name evidence="1" type="primary">trhO</name>
    <name type="ordered locus">SaurJH1_2770</name>
</gene>
<name>TRHO_STAA2</name>
<protein>
    <recommendedName>
        <fullName evidence="1">tRNA uridine(34) hydroxylase</fullName>
        <ecNumber evidence="1">1.14.-.-</ecNumber>
    </recommendedName>
    <alternativeName>
        <fullName evidence="1">tRNA hydroxylation protein O</fullName>
    </alternativeName>
</protein>
<sequence length="318" mass="37057">MNYQVLLYYKYTTIDDPEQFAQDHLAFCKAHHLKGRILVSTEGINGTLSGTKEETEQYMAHMHADERFKDMVFKIDEAEGHAFKKMHVRPRKEIVALDLEDDVDPRHTTGQYLSPVEFRKALEDDDTVIIDARNDYEFDLGHFRGAIRPDITRFRDLPDWIKENKALFTDKKVVTYCTGGIRCEKFSGWLLKEGFEDVAQLHGGIATYGKDPETKGQYWDGKMYVFDDRISVDINQVEKTIIGKDWFDGKPCERYINCANPECNKQILVSEENETKYLGACSYECAKHERNRYVQANNISDNEWQQRLTNFDDLHQHA</sequence>
<comment type="function">
    <text evidence="1">Catalyzes oxygen-dependent 5-hydroxyuridine (ho5U) modification at position 34 in tRNAs.</text>
</comment>
<comment type="catalytic activity">
    <reaction evidence="1">
        <text>uridine(34) in tRNA + AH2 + O2 = 5-hydroxyuridine(34) in tRNA + A + H2O</text>
        <dbReference type="Rhea" id="RHEA:64224"/>
        <dbReference type="Rhea" id="RHEA-COMP:11727"/>
        <dbReference type="Rhea" id="RHEA-COMP:13381"/>
        <dbReference type="ChEBI" id="CHEBI:13193"/>
        <dbReference type="ChEBI" id="CHEBI:15377"/>
        <dbReference type="ChEBI" id="CHEBI:15379"/>
        <dbReference type="ChEBI" id="CHEBI:17499"/>
        <dbReference type="ChEBI" id="CHEBI:65315"/>
        <dbReference type="ChEBI" id="CHEBI:136877"/>
    </reaction>
</comment>
<comment type="similarity">
    <text evidence="1">Belongs to the TrhO family.</text>
</comment>
<proteinExistence type="inferred from homology"/>
<dbReference type="EC" id="1.14.-.-" evidence="1"/>
<dbReference type="EMBL" id="CP000736">
    <property type="protein sequence ID" value="ABR53592.1"/>
    <property type="molecule type" value="Genomic_DNA"/>
</dbReference>
<dbReference type="SMR" id="A6U574"/>
<dbReference type="KEGG" id="sah:SaurJH1_2770"/>
<dbReference type="HOGENOM" id="CLU_038878_1_0_9"/>
<dbReference type="GO" id="GO:0016705">
    <property type="term" value="F:oxidoreductase activity, acting on paired donors, with incorporation or reduction of molecular oxygen"/>
    <property type="evidence" value="ECO:0007669"/>
    <property type="project" value="UniProtKB-UniRule"/>
</dbReference>
<dbReference type="GO" id="GO:0006400">
    <property type="term" value="P:tRNA modification"/>
    <property type="evidence" value="ECO:0007669"/>
    <property type="project" value="UniProtKB-UniRule"/>
</dbReference>
<dbReference type="CDD" id="cd01518">
    <property type="entry name" value="RHOD_YceA"/>
    <property type="match status" value="1"/>
</dbReference>
<dbReference type="Gene3D" id="3.30.70.100">
    <property type="match status" value="1"/>
</dbReference>
<dbReference type="Gene3D" id="3.40.250.10">
    <property type="entry name" value="Rhodanese-like domain"/>
    <property type="match status" value="1"/>
</dbReference>
<dbReference type="HAMAP" id="MF_00469">
    <property type="entry name" value="TrhO"/>
    <property type="match status" value="1"/>
</dbReference>
<dbReference type="InterPro" id="IPR001763">
    <property type="entry name" value="Rhodanese-like_dom"/>
</dbReference>
<dbReference type="InterPro" id="IPR036873">
    <property type="entry name" value="Rhodanese-like_dom_sf"/>
</dbReference>
<dbReference type="InterPro" id="IPR022111">
    <property type="entry name" value="Rhodanese_C"/>
</dbReference>
<dbReference type="InterPro" id="IPR020936">
    <property type="entry name" value="TrhO"/>
</dbReference>
<dbReference type="InterPro" id="IPR040503">
    <property type="entry name" value="TRHO_N"/>
</dbReference>
<dbReference type="NCBIfam" id="NF001135">
    <property type="entry name" value="PRK00142.1-3"/>
    <property type="match status" value="1"/>
</dbReference>
<dbReference type="PANTHER" id="PTHR43268:SF3">
    <property type="entry name" value="RHODANESE-LIKE DOMAIN-CONTAINING PROTEIN 7-RELATED"/>
    <property type="match status" value="1"/>
</dbReference>
<dbReference type="PANTHER" id="PTHR43268">
    <property type="entry name" value="THIOSULFATE SULFURTRANSFERASE/RHODANESE-LIKE DOMAIN-CONTAINING PROTEIN 2"/>
    <property type="match status" value="1"/>
</dbReference>
<dbReference type="Pfam" id="PF00581">
    <property type="entry name" value="Rhodanese"/>
    <property type="match status" value="1"/>
</dbReference>
<dbReference type="Pfam" id="PF12368">
    <property type="entry name" value="Rhodanese_C"/>
    <property type="match status" value="1"/>
</dbReference>
<dbReference type="Pfam" id="PF17773">
    <property type="entry name" value="UPF0176_N"/>
    <property type="match status" value="1"/>
</dbReference>
<dbReference type="SMART" id="SM00450">
    <property type="entry name" value="RHOD"/>
    <property type="match status" value="1"/>
</dbReference>
<dbReference type="SUPFAM" id="SSF52821">
    <property type="entry name" value="Rhodanese/Cell cycle control phosphatase"/>
    <property type="match status" value="1"/>
</dbReference>
<dbReference type="PROSITE" id="PS50206">
    <property type="entry name" value="RHODANESE_3"/>
    <property type="match status" value="1"/>
</dbReference>
<keyword id="KW-0560">Oxidoreductase</keyword>
<keyword id="KW-0819">tRNA processing</keyword>
<feature type="chain" id="PRO_1000081199" description="tRNA uridine(34) hydroxylase">
    <location>
        <begin position="1"/>
        <end position="318"/>
    </location>
</feature>
<feature type="domain" description="Rhodanese" evidence="1">
    <location>
        <begin position="123"/>
        <end position="217"/>
    </location>
</feature>
<feature type="active site" description="Cysteine persulfide intermediate" evidence="1">
    <location>
        <position position="177"/>
    </location>
</feature>
<evidence type="ECO:0000255" key="1">
    <source>
        <dbReference type="HAMAP-Rule" id="MF_00469"/>
    </source>
</evidence>